<evidence type="ECO:0000255" key="1">
    <source>
        <dbReference type="HAMAP-Rule" id="MF_01951"/>
    </source>
</evidence>
<reference key="1">
    <citation type="journal article" date="2005" name="Nucleic Acids Res.">
        <title>The genome sequence of Salmonella enterica serovar Choleraesuis, a highly invasive and resistant zoonotic pathogen.</title>
        <authorList>
            <person name="Chiu C.-H."/>
            <person name="Tang P."/>
            <person name="Chu C."/>
            <person name="Hu S."/>
            <person name="Bao Q."/>
            <person name="Yu J."/>
            <person name="Chou Y.-Y."/>
            <person name="Wang H.-S."/>
            <person name="Lee Y.-S."/>
        </authorList>
    </citation>
    <scope>NUCLEOTIDE SEQUENCE [LARGE SCALE GENOMIC DNA]</scope>
    <source>
        <strain>SC-B67</strain>
    </source>
</reference>
<feature type="chain" id="PRO_0000233253" description="L-ribulose-5-phosphate 3-epimerase UlaE">
    <location>
        <begin position="1"/>
        <end position="284"/>
    </location>
</feature>
<name>ULAE_SALCH</name>
<comment type="function">
    <text evidence="1">Catalyzes the isomerization of L-xylulose-5-phosphate to L-ribulose-5-phosphate. Is involved in the anaerobic L-ascorbate utilization.</text>
</comment>
<comment type="catalytic activity">
    <reaction evidence="1">
        <text>L-ribulose 5-phosphate = L-xylulose 5-phosphate</text>
        <dbReference type="Rhea" id="RHEA:18497"/>
        <dbReference type="ChEBI" id="CHEBI:57829"/>
        <dbReference type="ChEBI" id="CHEBI:58226"/>
        <dbReference type="EC" id="5.1.3.22"/>
    </reaction>
</comment>
<comment type="pathway">
    <text evidence="1">Cofactor degradation; L-ascorbate degradation; D-xylulose 5-phosphate from L-ascorbate: step 3/4.</text>
</comment>
<comment type="induction">
    <text evidence="1">Induced by L-ascorbate. Repressed by UlaR.</text>
</comment>
<comment type="similarity">
    <text evidence="1">Belongs to the L-ribulose-5-phosphate 3-epimerase family.</text>
</comment>
<accession>Q57GJ5</accession>
<sequence>MLSKQIPLGIYEKALPAGECWLERLRLAKTLGFDFVEMSVDETDARLARLDWSREQRLALVSAVAETGVRVPSMCLSAHRRFPLGSEDDAVRAQGLEIMRKAIQFAQDVGIRVIQLAGYDVYYQQANDETRCRFRDGLKESVDMASRAQVTLAMEIMDYPLMNSISKALGYAHYLNNPWFQLYPDIGNLSAWDNDVQMELQAGIGHIVAVHVKDTKPGVFKNVPFGEGVVDFESCFATLKQSGYCGPYLIEMWSETAENPAAEVAKARDWVKARMASAGLVEAA</sequence>
<gene>
    <name evidence="1" type="primary">ulaE</name>
    <name type="ordered locus">SCH_4261</name>
</gene>
<dbReference type="EC" id="5.1.3.22" evidence="1"/>
<dbReference type="EMBL" id="AE017220">
    <property type="protein sequence ID" value="AAX68167.1"/>
    <property type="molecule type" value="Genomic_DNA"/>
</dbReference>
<dbReference type="RefSeq" id="WP_000949531.1">
    <property type="nucleotide sequence ID" value="NC_006905.1"/>
</dbReference>
<dbReference type="SMR" id="Q57GJ5"/>
<dbReference type="KEGG" id="sec:SCH_4261"/>
<dbReference type="HOGENOM" id="CLU_082738_0_0_6"/>
<dbReference type="UniPathway" id="UPA00263">
    <property type="reaction ID" value="UER00379"/>
</dbReference>
<dbReference type="Proteomes" id="UP000000538">
    <property type="component" value="Chromosome"/>
</dbReference>
<dbReference type="GO" id="GO:0016861">
    <property type="term" value="F:intramolecular oxidoreductase activity, interconverting aldoses and ketoses"/>
    <property type="evidence" value="ECO:0007669"/>
    <property type="project" value="InterPro"/>
</dbReference>
<dbReference type="GO" id="GO:0034015">
    <property type="term" value="F:L-ribulose-5-phosphate 3-epimerase activity"/>
    <property type="evidence" value="ECO:0007669"/>
    <property type="project" value="UniProtKB-UniRule"/>
</dbReference>
<dbReference type="GO" id="GO:0019854">
    <property type="term" value="P:L-ascorbic acid catabolic process"/>
    <property type="evidence" value="ECO:0007669"/>
    <property type="project" value="UniProtKB-UniRule"/>
</dbReference>
<dbReference type="FunFam" id="3.20.20.150:FF:000003">
    <property type="entry name" value="L-ribulose-5-phosphate 3-epimerase UlaE"/>
    <property type="match status" value="1"/>
</dbReference>
<dbReference type="Gene3D" id="3.20.20.150">
    <property type="entry name" value="Divalent-metal-dependent TIM barrel enzymes"/>
    <property type="match status" value="1"/>
</dbReference>
<dbReference type="HAMAP" id="MF_01951">
    <property type="entry name" value="UlaE"/>
    <property type="match status" value="1"/>
</dbReference>
<dbReference type="InterPro" id="IPR004560">
    <property type="entry name" value="L-Ru-5P_3-Epase"/>
</dbReference>
<dbReference type="InterPro" id="IPR023492">
    <property type="entry name" value="L-Ru-5P_3-Epase_Enterobacteria"/>
</dbReference>
<dbReference type="InterPro" id="IPR050417">
    <property type="entry name" value="Sugar_Epim/Isomerase"/>
</dbReference>
<dbReference type="InterPro" id="IPR036237">
    <property type="entry name" value="Xyl_isomerase-like_sf"/>
</dbReference>
<dbReference type="InterPro" id="IPR013022">
    <property type="entry name" value="Xyl_isomerase-like_TIM-brl"/>
</dbReference>
<dbReference type="NCBIfam" id="TIGR00542">
    <property type="entry name" value="hxl6Piso_put"/>
    <property type="match status" value="1"/>
</dbReference>
<dbReference type="NCBIfam" id="NF009688">
    <property type="entry name" value="PRK13209.1"/>
    <property type="match status" value="1"/>
</dbReference>
<dbReference type="NCBIfam" id="NF009689">
    <property type="entry name" value="PRK13210.1"/>
    <property type="match status" value="1"/>
</dbReference>
<dbReference type="PANTHER" id="PTHR43489">
    <property type="entry name" value="ISOMERASE"/>
    <property type="match status" value="1"/>
</dbReference>
<dbReference type="PANTHER" id="PTHR43489:SF8">
    <property type="entry name" value="L-RIBULOSE-5-PHOSPHATE 3-EPIMERASE ULAE"/>
    <property type="match status" value="1"/>
</dbReference>
<dbReference type="Pfam" id="PF01261">
    <property type="entry name" value="AP_endonuc_2"/>
    <property type="match status" value="1"/>
</dbReference>
<dbReference type="SUPFAM" id="SSF51658">
    <property type="entry name" value="Xylose isomerase-like"/>
    <property type="match status" value="1"/>
</dbReference>
<organism>
    <name type="scientific">Salmonella choleraesuis (strain SC-B67)</name>
    <dbReference type="NCBI Taxonomy" id="321314"/>
    <lineage>
        <taxon>Bacteria</taxon>
        <taxon>Pseudomonadati</taxon>
        <taxon>Pseudomonadota</taxon>
        <taxon>Gammaproteobacteria</taxon>
        <taxon>Enterobacterales</taxon>
        <taxon>Enterobacteriaceae</taxon>
        <taxon>Salmonella</taxon>
    </lineage>
</organism>
<protein>
    <recommendedName>
        <fullName evidence="1">L-ribulose-5-phosphate 3-epimerase UlaE</fullName>
        <ecNumber evidence="1">5.1.3.22</ecNumber>
    </recommendedName>
    <alternativeName>
        <fullName evidence="1">L-ascorbate utilization protein E</fullName>
    </alternativeName>
    <alternativeName>
        <fullName evidence="1">L-xylulose-5-phosphate 3-epimerase</fullName>
    </alternativeName>
</protein>
<proteinExistence type="inferred from homology"/>
<keyword id="KW-0413">Isomerase</keyword>